<comment type="function">
    <text evidence="1">ATP-dependent DNA 3'-5' helicase required for initiation of viral DNA replication. It forms a complex with the viral E2 protein. The E1-E2 complex binds to the replication origin which contains binding sites for both proteins. During the initial step, a dimer of E1 interacts with a dimer of protein E2 leading to a complex that binds the viral origin of replication with high specificity. Then, a second dimer of E1 displaces the E2 dimer in an ATP-dependent manner to form the E1 tetramer. Following this, two E1 monomers are added to each half of the site, which results in the formation of two E1 trimers on the viral ori. Subsequently, two hexamers will be created. The double hexamer acts as a bi-directional helicase machinery and unwinds the viral DNA and then recruits the host DNA polymerase to start replication.</text>
</comment>
<comment type="catalytic activity">
    <reaction evidence="1">
        <text>Couples ATP hydrolysis with the unwinding of duplex DNA by translocating in the 3'-5' direction.</text>
        <dbReference type="EC" id="5.6.2.4"/>
    </reaction>
</comment>
<comment type="catalytic activity">
    <reaction evidence="1">
        <text>ATP + H2O = ADP + phosphate + H(+)</text>
        <dbReference type="Rhea" id="RHEA:13065"/>
        <dbReference type="ChEBI" id="CHEBI:15377"/>
        <dbReference type="ChEBI" id="CHEBI:15378"/>
        <dbReference type="ChEBI" id="CHEBI:30616"/>
        <dbReference type="ChEBI" id="CHEBI:43474"/>
        <dbReference type="ChEBI" id="CHEBI:456216"/>
        <dbReference type="EC" id="5.6.2.4"/>
    </reaction>
</comment>
<comment type="subunit">
    <text evidence="1">Can form hexamers. Interacts with E2 protein; this interaction increases E1 DNA binding specificity. Interacts with host DNA polymerase subunit POLA2. Interacts with host single stranded DNA-binding protein RPA1. Interacts with host TOP1; this interaction stimulates the enzymatic activity of TOP1.</text>
</comment>
<comment type="subcellular location">
    <subcellularLocation>
        <location evidence="1">Host nucleus</location>
    </subcellularLocation>
</comment>
<comment type="PTM">
    <text evidence="1">Phosphorylated.</text>
</comment>
<comment type="PTM">
    <text evidence="1">Sumoylated.</text>
</comment>
<comment type="similarity">
    <text evidence="1">Belongs to the papillomaviridae E1 protein family.</text>
</comment>
<protein>
    <recommendedName>
        <fullName evidence="1">Replication protein E1</fullName>
        <ecNumber evidence="1">5.6.2.4</ecNumber>
    </recommendedName>
    <alternativeName>
        <fullName evidence="1">ATP-dependent helicase E1</fullName>
    </alternativeName>
    <alternativeName>
        <fullName evidence="1">DNA 3'-5' helicase E1</fullName>
    </alternativeName>
</protein>
<reference key="1">
    <citation type="journal article" date="1994" name="Curr. Top. Microbiol. Immunol.">
        <title>Primer-directed sequencing of human papillomavirus types.</title>
        <authorList>
            <person name="Delius H."/>
            <person name="Hofmann B."/>
        </authorList>
    </citation>
    <scope>NUCLEOTIDE SEQUENCE [GENOMIC DNA]</scope>
</reference>
<reference key="2">
    <citation type="journal article" date="1992" name="J. Virol.">
        <title>Phylogenetic analysis of 48 papillomavirus types and 28 subtypes and variants: a showcase for the molecular evolution of DNA viruses.</title>
        <authorList>
            <person name="Chan S.-Y."/>
            <person name="Bernard H.U."/>
            <person name="Ong C.K."/>
            <person name="Chan S.P."/>
            <person name="Birgit H."/>
            <person name="Delius H."/>
        </authorList>
    </citation>
    <scope>NUCLEOTIDE SEQUENCE [GENOMIC DNA] OF 332-383</scope>
</reference>
<proteinExistence type="inferred from homology"/>
<keyword id="KW-0067">ATP-binding</keyword>
<keyword id="KW-0235">DNA replication</keyword>
<keyword id="KW-0238">DNA-binding</keyword>
<keyword id="KW-0244">Early protein</keyword>
<keyword id="KW-0347">Helicase</keyword>
<keyword id="KW-1048">Host nucleus</keyword>
<keyword id="KW-0378">Hydrolase</keyword>
<keyword id="KW-0413">Isomerase</keyword>
<keyword id="KW-1017">Isopeptide bond</keyword>
<keyword id="KW-0547">Nucleotide-binding</keyword>
<keyword id="KW-0597">Phosphoprotein</keyword>
<keyword id="KW-1185">Reference proteome</keyword>
<keyword id="KW-0832">Ubl conjugation</keyword>
<organismHost>
    <name type="scientific">Homo sapiens</name>
    <name type="common">Human</name>
    <dbReference type="NCBI Taxonomy" id="9606"/>
</organismHost>
<dbReference type="EC" id="5.6.2.4" evidence="1"/>
<dbReference type="EMBL" id="X74464">
    <property type="protein sequence ID" value="CAA52485.1"/>
    <property type="molecule type" value="Genomic_DNA"/>
</dbReference>
<dbReference type="EMBL" id="M96315">
    <property type="protein sequence ID" value="AAA47004.1"/>
    <property type="molecule type" value="Genomic_DNA"/>
</dbReference>
<dbReference type="PIR" id="S36592">
    <property type="entry name" value="S36592"/>
</dbReference>
<dbReference type="RefSeq" id="NP_041863.1">
    <property type="nucleotide sequence ID" value="NC_001596.1"/>
</dbReference>
<dbReference type="SMR" id="Q05111"/>
<dbReference type="DNASU" id="1489478"/>
<dbReference type="GeneID" id="1489478"/>
<dbReference type="KEGG" id="vg:1489478"/>
<dbReference type="OrthoDB" id="4795at10239"/>
<dbReference type="Proteomes" id="UP000009104">
    <property type="component" value="Genome"/>
</dbReference>
<dbReference type="GO" id="GO:0042025">
    <property type="term" value="C:host cell nucleus"/>
    <property type="evidence" value="ECO:0007669"/>
    <property type="project" value="UniProtKB-SubCell"/>
</dbReference>
<dbReference type="GO" id="GO:0005524">
    <property type="term" value="F:ATP binding"/>
    <property type="evidence" value="ECO:0007669"/>
    <property type="project" value="UniProtKB-UniRule"/>
</dbReference>
<dbReference type="GO" id="GO:0016887">
    <property type="term" value="F:ATP hydrolysis activity"/>
    <property type="evidence" value="ECO:0007669"/>
    <property type="project" value="RHEA"/>
</dbReference>
<dbReference type="GO" id="GO:0003677">
    <property type="term" value="F:DNA binding"/>
    <property type="evidence" value="ECO:0007669"/>
    <property type="project" value="UniProtKB-UniRule"/>
</dbReference>
<dbReference type="GO" id="GO:0003678">
    <property type="term" value="F:DNA helicase activity"/>
    <property type="evidence" value="ECO:0007669"/>
    <property type="project" value="UniProtKB-UniRule"/>
</dbReference>
<dbReference type="GO" id="GO:0006260">
    <property type="term" value="P:DNA replication"/>
    <property type="evidence" value="ECO:0007669"/>
    <property type="project" value="UniProtKB-UniRule"/>
</dbReference>
<dbReference type="Gene3D" id="3.40.1310.10">
    <property type="match status" value="1"/>
</dbReference>
<dbReference type="Gene3D" id="3.40.50.300">
    <property type="entry name" value="P-loop containing nucleotide triphosphate hydrolases"/>
    <property type="match status" value="1"/>
</dbReference>
<dbReference type="Gene3D" id="1.10.10.510">
    <property type="entry name" value="Zinc finger, large T-antigen D1 domain"/>
    <property type="match status" value="1"/>
</dbReference>
<dbReference type="HAMAP" id="MF_04000">
    <property type="entry name" value="PPV_E1"/>
    <property type="match status" value="1"/>
</dbReference>
<dbReference type="InterPro" id="IPR014015">
    <property type="entry name" value="Helicase_SF3_DNA-vir"/>
</dbReference>
<dbReference type="InterPro" id="IPR027417">
    <property type="entry name" value="P-loop_NTPase"/>
</dbReference>
<dbReference type="InterPro" id="IPR001177">
    <property type="entry name" value="PPV_DNA_helicase_E1_C"/>
</dbReference>
<dbReference type="InterPro" id="IPR014000">
    <property type="entry name" value="PPV_DNA_helicase_E1_N"/>
</dbReference>
<dbReference type="InterPro" id="IPR046832">
    <property type="entry name" value="PPV_E1_DBD"/>
</dbReference>
<dbReference type="InterPro" id="IPR046935">
    <property type="entry name" value="PPV_E1_DBD_sf"/>
</dbReference>
<dbReference type="InterPro" id="IPR016393">
    <property type="entry name" value="Rep_E1_papillomaV"/>
</dbReference>
<dbReference type="InterPro" id="IPR037102">
    <property type="entry name" value="Znf_lg_T-Ag_D1_dom_sf"/>
</dbReference>
<dbReference type="Pfam" id="PF00519">
    <property type="entry name" value="PPV_E1_C"/>
    <property type="match status" value="1"/>
</dbReference>
<dbReference type="Pfam" id="PF20450">
    <property type="entry name" value="PPV_E1_DBD"/>
    <property type="match status" value="1"/>
</dbReference>
<dbReference type="Pfam" id="PF00524">
    <property type="entry name" value="PPV_E1_N"/>
    <property type="match status" value="1"/>
</dbReference>
<dbReference type="PIRSF" id="PIRSF003383">
    <property type="entry name" value="Rep_E1_papillomaV"/>
    <property type="match status" value="1"/>
</dbReference>
<dbReference type="SUPFAM" id="SSF55464">
    <property type="entry name" value="Origin of replication-binding domain, RBD-like"/>
    <property type="match status" value="1"/>
</dbReference>
<dbReference type="SUPFAM" id="SSF52540">
    <property type="entry name" value="P-loop containing nucleoside triphosphate hydrolases"/>
    <property type="match status" value="1"/>
</dbReference>
<dbReference type="PROSITE" id="PS51206">
    <property type="entry name" value="SF3_HELICASE_1"/>
    <property type="match status" value="1"/>
</dbReference>
<organism>
    <name type="scientific">Human papillomavirus 9</name>
    <dbReference type="NCBI Taxonomy" id="10621"/>
    <lineage>
        <taxon>Viruses</taxon>
        <taxon>Monodnaviria</taxon>
        <taxon>Shotokuvirae</taxon>
        <taxon>Cossaviricota</taxon>
        <taxon>Papovaviricetes</taxon>
        <taxon>Zurhausenvirales</taxon>
        <taxon>Papillomaviridae</taxon>
        <taxon>Firstpapillomavirinae</taxon>
        <taxon>Betapapillomavirus</taxon>
        <taxon>Betapapillomavirus 2</taxon>
    </lineage>
</organism>
<gene>
    <name evidence="1" type="primary">E1</name>
</gene>
<evidence type="ECO:0000255" key="1">
    <source>
        <dbReference type="HAMAP-Rule" id="MF_04000"/>
    </source>
</evidence>
<sequence>MSDNKGTKLDPKECCSAWLSLEAECSDSSLDGDLEKLFDEGTDSDISDLIDDGDAVQGNSRELFCQQESEESEQQTQLLKRKYISPQAVLQLSPQLESISLSPQHKPKRRLFEQDSGLECSVNEAEDLSETQVEEVPANPPTTAQGTKGLGIVKDLLKHSNVKAVLMAKFKEAFGVGFAELTRQYKSNKTCCRDWVIAVYAVNDDLIESSKQLLLQHCAYIWLHYMPPMCLYLLCFNVGKSRETVCRLLSTLLQVSEVQLLSEPPKLRSVCAALFWYKGSMNPNVYAHGAYPEWILTQTLINHQSANATQFDLSTMIQFAYDHEYFDEATIAYQYAKLAETDANARAFLQSNSQARLVKECATMVRHYMRGEMKEMSMSTWIHRKLLTVESNGQWSDIVRFIRYQDINFIEFLTVFKAFLQNKPKQNCLLFHGPPDTGKSMFTMSLISVLKGKVLSFANCKSTFWLQPIADTKLALIDDVTHVCWEYIDQYLRNGLDGNYVCLDMKHRAPCQMKFPPLMLTSNIDITKDQKYKYLHSRVKSFAFNNKFPLDANHKPQFELTDQSWKSFFKRLWTQLDLSDQEDEGEDGNSQRTFQCTARDFNGPV</sequence>
<accession>Q05111</accession>
<name>VE1_HPV09</name>
<feature type="chain" id="PRO_0000133107" description="Replication protein E1">
    <location>
        <begin position="1"/>
        <end position="605"/>
    </location>
</feature>
<feature type="domain" description="SF3 helicase" evidence="1">
    <location>
        <begin position="407"/>
        <end position="557"/>
    </location>
</feature>
<feature type="region of interest" description="DNA-binding region" evidence="1">
    <location>
        <begin position="145"/>
        <end position="308"/>
    </location>
</feature>
<feature type="short sequence motif" description="Nuclear localization signal" evidence="1">
    <location>
        <begin position="80"/>
        <end position="82"/>
    </location>
</feature>
<feature type="short sequence motif" description="Nuclear export signal" evidence="1">
    <location>
        <begin position="92"/>
        <end position="101"/>
    </location>
</feature>
<feature type="binding site" evidence="1">
    <location>
        <begin position="433"/>
        <end position="440"/>
    </location>
    <ligand>
        <name>ATP</name>
        <dbReference type="ChEBI" id="CHEBI:30616"/>
    </ligand>
</feature>
<feature type="modified residue" description="Phosphoserine; by host" evidence="1">
    <location>
        <position position="85"/>
    </location>
</feature>
<feature type="modified residue" description="Phosphoserine; by host" evidence="1">
    <location>
        <position position="93"/>
    </location>
</feature>
<feature type="cross-link" description="Glycyl lysine isopeptide (Lys-Gly) (interchain with G-Cter in SUMO)" evidence="1">
    <location>
        <position position="514"/>
    </location>
</feature>